<dbReference type="EC" id="6.1.1.19" evidence="1"/>
<dbReference type="EMBL" id="AL157959">
    <property type="protein sequence ID" value="CAM08836.1"/>
    <property type="molecule type" value="Genomic_DNA"/>
</dbReference>
<dbReference type="PIR" id="F81866">
    <property type="entry name" value="F81866"/>
</dbReference>
<dbReference type="RefSeq" id="WP_002247007.1">
    <property type="nucleotide sequence ID" value="NC_003116.1"/>
</dbReference>
<dbReference type="SMR" id="Q9JTM7"/>
<dbReference type="EnsemblBacteria" id="CAM08836">
    <property type="protein sequence ID" value="CAM08836"/>
    <property type="gene ID" value="NMA1707"/>
</dbReference>
<dbReference type="KEGG" id="nma:NMA1707"/>
<dbReference type="HOGENOM" id="CLU_006406_5_1_4"/>
<dbReference type="Proteomes" id="UP000000626">
    <property type="component" value="Chromosome"/>
</dbReference>
<dbReference type="GO" id="GO:0005737">
    <property type="term" value="C:cytoplasm"/>
    <property type="evidence" value="ECO:0007669"/>
    <property type="project" value="UniProtKB-SubCell"/>
</dbReference>
<dbReference type="GO" id="GO:0004814">
    <property type="term" value="F:arginine-tRNA ligase activity"/>
    <property type="evidence" value="ECO:0007669"/>
    <property type="project" value="UniProtKB-UniRule"/>
</dbReference>
<dbReference type="GO" id="GO:0005524">
    <property type="term" value="F:ATP binding"/>
    <property type="evidence" value="ECO:0007669"/>
    <property type="project" value="UniProtKB-UniRule"/>
</dbReference>
<dbReference type="GO" id="GO:0006420">
    <property type="term" value="P:arginyl-tRNA aminoacylation"/>
    <property type="evidence" value="ECO:0007669"/>
    <property type="project" value="UniProtKB-UniRule"/>
</dbReference>
<dbReference type="CDD" id="cd07956">
    <property type="entry name" value="Anticodon_Ia_Arg"/>
    <property type="match status" value="1"/>
</dbReference>
<dbReference type="CDD" id="cd00671">
    <property type="entry name" value="ArgRS_core"/>
    <property type="match status" value="1"/>
</dbReference>
<dbReference type="FunFam" id="3.40.50.620:FF:000030">
    <property type="entry name" value="Arginine--tRNA ligase"/>
    <property type="match status" value="1"/>
</dbReference>
<dbReference type="FunFam" id="1.10.730.10:FF:000006">
    <property type="entry name" value="Arginyl-tRNA synthetase 2, mitochondrial"/>
    <property type="match status" value="1"/>
</dbReference>
<dbReference type="Gene3D" id="3.30.1360.70">
    <property type="entry name" value="Arginyl tRNA synthetase N-terminal domain"/>
    <property type="match status" value="1"/>
</dbReference>
<dbReference type="Gene3D" id="3.40.50.620">
    <property type="entry name" value="HUPs"/>
    <property type="match status" value="1"/>
</dbReference>
<dbReference type="Gene3D" id="1.10.730.10">
    <property type="entry name" value="Isoleucyl-tRNA Synthetase, Domain 1"/>
    <property type="match status" value="1"/>
</dbReference>
<dbReference type="HAMAP" id="MF_00123">
    <property type="entry name" value="Arg_tRNA_synth"/>
    <property type="match status" value="1"/>
</dbReference>
<dbReference type="InterPro" id="IPR001412">
    <property type="entry name" value="aa-tRNA-synth_I_CS"/>
</dbReference>
<dbReference type="InterPro" id="IPR001278">
    <property type="entry name" value="Arg-tRNA-ligase"/>
</dbReference>
<dbReference type="InterPro" id="IPR005148">
    <property type="entry name" value="Arg-tRNA-synth_N"/>
</dbReference>
<dbReference type="InterPro" id="IPR036695">
    <property type="entry name" value="Arg-tRNA-synth_N_sf"/>
</dbReference>
<dbReference type="InterPro" id="IPR035684">
    <property type="entry name" value="ArgRS_core"/>
</dbReference>
<dbReference type="InterPro" id="IPR008909">
    <property type="entry name" value="DALR_anticod-bd"/>
</dbReference>
<dbReference type="InterPro" id="IPR014729">
    <property type="entry name" value="Rossmann-like_a/b/a_fold"/>
</dbReference>
<dbReference type="InterPro" id="IPR009080">
    <property type="entry name" value="tRNAsynth_Ia_anticodon-bd"/>
</dbReference>
<dbReference type="NCBIfam" id="TIGR00456">
    <property type="entry name" value="argS"/>
    <property type="match status" value="1"/>
</dbReference>
<dbReference type="PANTHER" id="PTHR11956:SF5">
    <property type="entry name" value="ARGININE--TRNA LIGASE, CYTOPLASMIC"/>
    <property type="match status" value="1"/>
</dbReference>
<dbReference type="PANTHER" id="PTHR11956">
    <property type="entry name" value="ARGINYL-TRNA SYNTHETASE"/>
    <property type="match status" value="1"/>
</dbReference>
<dbReference type="Pfam" id="PF03485">
    <property type="entry name" value="Arg_tRNA_synt_N"/>
    <property type="match status" value="1"/>
</dbReference>
<dbReference type="Pfam" id="PF05746">
    <property type="entry name" value="DALR_1"/>
    <property type="match status" value="1"/>
</dbReference>
<dbReference type="Pfam" id="PF00750">
    <property type="entry name" value="tRNA-synt_1d"/>
    <property type="match status" value="1"/>
</dbReference>
<dbReference type="PRINTS" id="PR01038">
    <property type="entry name" value="TRNASYNTHARG"/>
</dbReference>
<dbReference type="SMART" id="SM01016">
    <property type="entry name" value="Arg_tRNA_synt_N"/>
    <property type="match status" value="1"/>
</dbReference>
<dbReference type="SMART" id="SM00836">
    <property type="entry name" value="DALR_1"/>
    <property type="match status" value="1"/>
</dbReference>
<dbReference type="SUPFAM" id="SSF47323">
    <property type="entry name" value="Anticodon-binding domain of a subclass of class I aminoacyl-tRNA synthetases"/>
    <property type="match status" value="1"/>
</dbReference>
<dbReference type="SUPFAM" id="SSF55190">
    <property type="entry name" value="Arginyl-tRNA synthetase (ArgRS), N-terminal 'additional' domain"/>
    <property type="match status" value="1"/>
</dbReference>
<dbReference type="SUPFAM" id="SSF52374">
    <property type="entry name" value="Nucleotidylyl transferase"/>
    <property type="match status" value="1"/>
</dbReference>
<dbReference type="PROSITE" id="PS00178">
    <property type="entry name" value="AA_TRNA_LIGASE_I"/>
    <property type="match status" value="1"/>
</dbReference>
<reference key="1">
    <citation type="journal article" date="2000" name="Nature">
        <title>Complete DNA sequence of a serogroup A strain of Neisseria meningitidis Z2491.</title>
        <authorList>
            <person name="Parkhill J."/>
            <person name="Achtman M."/>
            <person name="James K.D."/>
            <person name="Bentley S.D."/>
            <person name="Churcher C.M."/>
            <person name="Klee S.R."/>
            <person name="Morelli G."/>
            <person name="Basham D."/>
            <person name="Brown D."/>
            <person name="Chillingworth T."/>
            <person name="Davies R.M."/>
            <person name="Davis P."/>
            <person name="Devlin K."/>
            <person name="Feltwell T."/>
            <person name="Hamlin N."/>
            <person name="Holroyd S."/>
            <person name="Jagels K."/>
            <person name="Leather S."/>
            <person name="Moule S."/>
            <person name="Mungall K.L."/>
            <person name="Quail M.A."/>
            <person name="Rajandream M.A."/>
            <person name="Rutherford K.M."/>
            <person name="Simmonds M."/>
            <person name="Skelton J."/>
            <person name="Whitehead S."/>
            <person name="Spratt B.G."/>
            <person name="Barrell B.G."/>
        </authorList>
    </citation>
    <scope>NUCLEOTIDE SEQUENCE [LARGE SCALE GENOMIC DNA]</scope>
    <source>
        <strain>DSM 15465 / Z2491</strain>
    </source>
</reference>
<accession>Q9JTM7</accession>
<accession>A1ISS4</accession>
<keyword id="KW-0030">Aminoacyl-tRNA synthetase</keyword>
<keyword id="KW-0067">ATP-binding</keyword>
<keyword id="KW-0963">Cytoplasm</keyword>
<keyword id="KW-0436">Ligase</keyword>
<keyword id="KW-0547">Nucleotide-binding</keyword>
<keyword id="KW-0648">Protein biosynthesis</keyword>
<protein>
    <recommendedName>
        <fullName evidence="1">Arginine--tRNA ligase</fullName>
        <ecNumber evidence="1">6.1.1.19</ecNumber>
    </recommendedName>
    <alternativeName>
        <fullName evidence="1">Arginyl-tRNA synthetase</fullName>
        <shortName evidence="1">ArgRS</shortName>
    </alternativeName>
</protein>
<feature type="chain" id="PRO_0000151582" description="Arginine--tRNA ligase">
    <location>
        <begin position="1"/>
        <end position="572"/>
    </location>
</feature>
<feature type="short sequence motif" description="'HIGH' region">
    <location>
        <begin position="122"/>
        <end position="132"/>
    </location>
</feature>
<sequence length="572" mass="62705">MNLHQTVEREAAAAFAAAGIADSPVVLQPTKNAEHGDFQINGVMGAAKKAKQNPRELAQKVAEALADNAVIESAEVAGPGFINLRLRPEFLAQNIQTALNDARFGIAKTDKPQTVVIDYSSPNLAKEMHVGHLRSSIIGDSISRVLAFMGNTVVRQNHVGDWGTQFGMLVAYLVEQQKDNAAFELADLEQFYRAAKVRFDEDPAFADTAREYVVKLQGGDETVLALWKQFVDISLSHAQAVYDTLGLKLRPEDVAGESKYNDDLQPVVDDLVQKGLAVEDDGAKVVFLDEFKNKEGEPAAFIVQKQGGGFLYASTDLACLRYRVGTLHADRLLYVVDHRQALHFEQLFTTSRKAGYLPENVGAAFVGFGTMMGKDGKPFKTRSGDTVKLVDLLTEAVERAAALVKEKNPELGADEAAKIGKTVGIGAVKYADLSKNRTSNYVFDWDAMLSFEGNTAPYLQYAYTRVQSVFRKAGEWDATAPTVLSEPLEKQLAAELLKFEDVLQSVADTAYPHYLAAYLYQIATLFSRFYEACPILKAESASRNSRLQLAKLTGDTLKQGLDLLGIDVLDVM</sequence>
<gene>
    <name evidence="1" type="primary">argS</name>
    <name type="ordered locus">NMA1707</name>
</gene>
<organism>
    <name type="scientific">Neisseria meningitidis serogroup A / serotype 4A (strain DSM 15465 / Z2491)</name>
    <dbReference type="NCBI Taxonomy" id="122587"/>
    <lineage>
        <taxon>Bacteria</taxon>
        <taxon>Pseudomonadati</taxon>
        <taxon>Pseudomonadota</taxon>
        <taxon>Betaproteobacteria</taxon>
        <taxon>Neisseriales</taxon>
        <taxon>Neisseriaceae</taxon>
        <taxon>Neisseria</taxon>
    </lineage>
</organism>
<name>SYR_NEIMA</name>
<comment type="catalytic activity">
    <reaction evidence="1">
        <text>tRNA(Arg) + L-arginine + ATP = L-arginyl-tRNA(Arg) + AMP + diphosphate</text>
        <dbReference type="Rhea" id="RHEA:20301"/>
        <dbReference type="Rhea" id="RHEA-COMP:9658"/>
        <dbReference type="Rhea" id="RHEA-COMP:9673"/>
        <dbReference type="ChEBI" id="CHEBI:30616"/>
        <dbReference type="ChEBI" id="CHEBI:32682"/>
        <dbReference type="ChEBI" id="CHEBI:33019"/>
        <dbReference type="ChEBI" id="CHEBI:78442"/>
        <dbReference type="ChEBI" id="CHEBI:78513"/>
        <dbReference type="ChEBI" id="CHEBI:456215"/>
        <dbReference type="EC" id="6.1.1.19"/>
    </reaction>
</comment>
<comment type="subunit">
    <text evidence="1">Monomer.</text>
</comment>
<comment type="subcellular location">
    <subcellularLocation>
        <location evidence="1">Cytoplasm</location>
    </subcellularLocation>
</comment>
<comment type="similarity">
    <text evidence="1">Belongs to the class-I aminoacyl-tRNA synthetase family.</text>
</comment>
<evidence type="ECO:0000255" key="1">
    <source>
        <dbReference type="HAMAP-Rule" id="MF_00123"/>
    </source>
</evidence>
<proteinExistence type="inferred from homology"/>